<proteinExistence type="inferred from homology"/>
<organism>
    <name type="scientific">Rickettsia akari (strain Hartford)</name>
    <dbReference type="NCBI Taxonomy" id="293614"/>
    <lineage>
        <taxon>Bacteria</taxon>
        <taxon>Pseudomonadati</taxon>
        <taxon>Pseudomonadota</taxon>
        <taxon>Alphaproteobacteria</taxon>
        <taxon>Rickettsiales</taxon>
        <taxon>Rickettsiaceae</taxon>
        <taxon>Rickettsieae</taxon>
        <taxon>Rickettsia</taxon>
        <taxon>spotted fever group</taxon>
    </lineage>
</organism>
<accession>A8GM17</accession>
<feature type="chain" id="PRO_1000062510" description="Protein-export protein SecB">
    <location>
        <begin position="1"/>
        <end position="152"/>
    </location>
</feature>
<gene>
    <name evidence="1" type="primary">secB</name>
    <name type="ordered locus">A1C_00545</name>
</gene>
<protein>
    <recommendedName>
        <fullName evidence="1">Protein-export protein SecB</fullName>
    </recommendedName>
</protein>
<keyword id="KW-0143">Chaperone</keyword>
<keyword id="KW-0963">Cytoplasm</keyword>
<keyword id="KW-0653">Protein transport</keyword>
<keyword id="KW-0811">Translocation</keyword>
<keyword id="KW-0813">Transport</keyword>
<dbReference type="EMBL" id="CP000847">
    <property type="protein sequence ID" value="ABV74442.1"/>
    <property type="molecule type" value="Genomic_DNA"/>
</dbReference>
<dbReference type="RefSeq" id="WP_012013312.1">
    <property type="nucleotide sequence ID" value="NC_009881.1"/>
</dbReference>
<dbReference type="SMR" id="A8GM17"/>
<dbReference type="STRING" id="293614.A1C_00545"/>
<dbReference type="KEGG" id="rak:A1C_00545"/>
<dbReference type="eggNOG" id="COG1952">
    <property type="taxonomic scope" value="Bacteria"/>
</dbReference>
<dbReference type="HOGENOM" id="CLU_111574_0_0_5"/>
<dbReference type="Proteomes" id="UP000006830">
    <property type="component" value="Chromosome"/>
</dbReference>
<dbReference type="GO" id="GO:0005737">
    <property type="term" value="C:cytoplasm"/>
    <property type="evidence" value="ECO:0007669"/>
    <property type="project" value="UniProtKB-SubCell"/>
</dbReference>
<dbReference type="GO" id="GO:0051082">
    <property type="term" value="F:unfolded protein binding"/>
    <property type="evidence" value="ECO:0007669"/>
    <property type="project" value="InterPro"/>
</dbReference>
<dbReference type="GO" id="GO:0006457">
    <property type="term" value="P:protein folding"/>
    <property type="evidence" value="ECO:0007669"/>
    <property type="project" value="UniProtKB-UniRule"/>
</dbReference>
<dbReference type="GO" id="GO:0051262">
    <property type="term" value="P:protein tetramerization"/>
    <property type="evidence" value="ECO:0007669"/>
    <property type="project" value="InterPro"/>
</dbReference>
<dbReference type="GO" id="GO:0015031">
    <property type="term" value="P:protein transport"/>
    <property type="evidence" value="ECO:0007669"/>
    <property type="project" value="UniProtKB-UniRule"/>
</dbReference>
<dbReference type="CDD" id="cd00557">
    <property type="entry name" value="Translocase_SecB"/>
    <property type="match status" value="1"/>
</dbReference>
<dbReference type="Gene3D" id="3.10.420.10">
    <property type="entry name" value="SecB-like"/>
    <property type="match status" value="1"/>
</dbReference>
<dbReference type="HAMAP" id="MF_00821">
    <property type="entry name" value="SecB"/>
    <property type="match status" value="1"/>
</dbReference>
<dbReference type="InterPro" id="IPR003708">
    <property type="entry name" value="SecB"/>
</dbReference>
<dbReference type="InterPro" id="IPR035958">
    <property type="entry name" value="SecB-like_sf"/>
</dbReference>
<dbReference type="NCBIfam" id="NF004392">
    <property type="entry name" value="PRK05751.1-3"/>
    <property type="match status" value="1"/>
</dbReference>
<dbReference type="NCBIfam" id="TIGR00809">
    <property type="entry name" value="secB"/>
    <property type="match status" value="1"/>
</dbReference>
<dbReference type="PANTHER" id="PTHR36918">
    <property type="match status" value="1"/>
</dbReference>
<dbReference type="PANTHER" id="PTHR36918:SF1">
    <property type="entry name" value="PROTEIN-EXPORT PROTEIN SECB"/>
    <property type="match status" value="1"/>
</dbReference>
<dbReference type="Pfam" id="PF02556">
    <property type="entry name" value="SecB"/>
    <property type="match status" value="1"/>
</dbReference>
<dbReference type="PRINTS" id="PR01594">
    <property type="entry name" value="SECBCHAPRONE"/>
</dbReference>
<dbReference type="SUPFAM" id="SSF54611">
    <property type="entry name" value="SecB-like"/>
    <property type="match status" value="1"/>
</dbReference>
<evidence type="ECO:0000255" key="1">
    <source>
        <dbReference type="HAMAP-Rule" id="MF_00821"/>
    </source>
</evidence>
<sequence>MSTINTDTNEAMPHISVNAQYIKDLSLENPSAPSSLAALDQRPQIDLSLDINITNLSEENFYEVELNIEATARNEKYKLFHIELKYAGVFNLINIDSEQHPILLSVHCPAMIFPFARKIISSCTQDAGFQPLMIDPIDFGALYHKKMSEHQN</sequence>
<reference key="1">
    <citation type="submission" date="2007-09" db="EMBL/GenBank/DDBJ databases">
        <title>Complete genome sequence of Rickettsia akari.</title>
        <authorList>
            <person name="Madan A."/>
            <person name="Fahey J."/>
            <person name="Helton E."/>
            <person name="Ketteman M."/>
            <person name="Madan A."/>
            <person name="Rodrigues S."/>
            <person name="Sanchez A."/>
            <person name="Whiting M."/>
            <person name="Dasch G."/>
            <person name="Eremeeva M."/>
        </authorList>
    </citation>
    <scope>NUCLEOTIDE SEQUENCE [LARGE SCALE GENOMIC DNA]</scope>
    <source>
        <strain>Hartford</strain>
    </source>
</reference>
<comment type="function">
    <text evidence="1">One of the proteins required for the normal export of preproteins out of the cell cytoplasm. It is a molecular chaperone that binds to a subset of precursor proteins, maintaining them in a translocation-competent state. It also specifically binds to its receptor SecA.</text>
</comment>
<comment type="subunit">
    <text evidence="1">Homotetramer, a dimer of dimers. One homotetramer interacts with 1 SecA dimer.</text>
</comment>
<comment type="subcellular location">
    <subcellularLocation>
        <location evidence="1">Cytoplasm</location>
    </subcellularLocation>
</comment>
<comment type="similarity">
    <text evidence="1">Belongs to the SecB family.</text>
</comment>
<name>SECB_RICAH</name>